<comment type="function">
    <text evidence="1">Catalyzes the ferrous insertion into protoporphyrin IX.</text>
</comment>
<comment type="catalytic activity">
    <reaction evidence="1">
        <text>heme b + 2 H(+) = protoporphyrin IX + Fe(2+)</text>
        <dbReference type="Rhea" id="RHEA:22584"/>
        <dbReference type="ChEBI" id="CHEBI:15378"/>
        <dbReference type="ChEBI" id="CHEBI:29033"/>
        <dbReference type="ChEBI" id="CHEBI:57306"/>
        <dbReference type="ChEBI" id="CHEBI:60344"/>
        <dbReference type="EC" id="4.98.1.1"/>
    </reaction>
</comment>
<comment type="pathway">
    <text evidence="1">Porphyrin-containing compound metabolism; protoheme biosynthesis; protoheme from protoporphyrin-IX: step 1/1.</text>
</comment>
<comment type="subcellular location">
    <subcellularLocation>
        <location evidence="1">Cytoplasm</location>
    </subcellularLocation>
</comment>
<comment type="similarity">
    <text evidence="1">Belongs to the ferrochelatase family.</text>
</comment>
<feature type="chain" id="PRO_1000059476" description="Ferrochelatase">
    <location>
        <begin position="1"/>
        <end position="355"/>
    </location>
</feature>
<feature type="binding site" evidence="1">
    <location>
        <position position="214"/>
    </location>
    <ligand>
        <name>Fe cation</name>
        <dbReference type="ChEBI" id="CHEBI:24875"/>
    </ligand>
</feature>
<feature type="binding site" evidence="1">
    <location>
        <position position="295"/>
    </location>
    <ligand>
        <name>Fe cation</name>
        <dbReference type="ChEBI" id="CHEBI:24875"/>
    </ligand>
</feature>
<keyword id="KW-0963">Cytoplasm</keyword>
<keyword id="KW-0350">Heme biosynthesis</keyword>
<keyword id="KW-0408">Iron</keyword>
<keyword id="KW-0456">Lyase</keyword>
<keyword id="KW-0479">Metal-binding</keyword>
<keyword id="KW-0627">Porphyrin biosynthesis</keyword>
<dbReference type="EC" id="4.98.1.1" evidence="1"/>
<dbReference type="EMBL" id="CP000086">
    <property type="protein sequence ID" value="ABC36533.1"/>
    <property type="molecule type" value="Genomic_DNA"/>
</dbReference>
<dbReference type="RefSeq" id="WP_009889245.1">
    <property type="nucleotide sequence ID" value="NZ_CP008785.1"/>
</dbReference>
<dbReference type="SMR" id="Q2SYZ9"/>
<dbReference type="GeneID" id="45121048"/>
<dbReference type="KEGG" id="bte:BTH_I1303"/>
<dbReference type="HOGENOM" id="CLU_018884_0_0_4"/>
<dbReference type="UniPathway" id="UPA00252">
    <property type="reaction ID" value="UER00325"/>
</dbReference>
<dbReference type="Proteomes" id="UP000001930">
    <property type="component" value="Chromosome I"/>
</dbReference>
<dbReference type="GO" id="GO:0005737">
    <property type="term" value="C:cytoplasm"/>
    <property type="evidence" value="ECO:0007669"/>
    <property type="project" value="UniProtKB-SubCell"/>
</dbReference>
<dbReference type="GO" id="GO:0004325">
    <property type="term" value="F:ferrochelatase activity"/>
    <property type="evidence" value="ECO:0007669"/>
    <property type="project" value="UniProtKB-UniRule"/>
</dbReference>
<dbReference type="GO" id="GO:0046872">
    <property type="term" value="F:metal ion binding"/>
    <property type="evidence" value="ECO:0007669"/>
    <property type="project" value="UniProtKB-KW"/>
</dbReference>
<dbReference type="GO" id="GO:0006783">
    <property type="term" value="P:heme biosynthetic process"/>
    <property type="evidence" value="ECO:0007669"/>
    <property type="project" value="UniProtKB-UniRule"/>
</dbReference>
<dbReference type="CDD" id="cd00419">
    <property type="entry name" value="Ferrochelatase_C"/>
    <property type="match status" value="1"/>
</dbReference>
<dbReference type="CDD" id="cd03411">
    <property type="entry name" value="Ferrochelatase_N"/>
    <property type="match status" value="1"/>
</dbReference>
<dbReference type="FunFam" id="3.40.50.1400:FF:000002">
    <property type="entry name" value="Ferrochelatase"/>
    <property type="match status" value="1"/>
</dbReference>
<dbReference type="Gene3D" id="3.40.50.1400">
    <property type="match status" value="2"/>
</dbReference>
<dbReference type="HAMAP" id="MF_00323">
    <property type="entry name" value="Ferrochelatase"/>
    <property type="match status" value="1"/>
</dbReference>
<dbReference type="InterPro" id="IPR001015">
    <property type="entry name" value="Ferrochelatase"/>
</dbReference>
<dbReference type="InterPro" id="IPR019772">
    <property type="entry name" value="Ferrochelatase_AS"/>
</dbReference>
<dbReference type="InterPro" id="IPR033644">
    <property type="entry name" value="Ferrochelatase_C"/>
</dbReference>
<dbReference type="InterPro" id="IPR033659">
    <property type="entry name" value="Ferrochelatase_N"/>
</dbReference>
<dbReference type="NCBIfam" id="TIGR00109">
    <property type="entry name" value="hemH"/>
    <property type="match status" value="1"/>
</dbReference>
<dbReference type="PANTHER" id="PTHR11108">
    <property type="entry name" value="FERROCHELATASE"/>
    <property type="match status" value="1"/>
</dbReference>
<dbReference type="PANTHER" id="PTHR11108:SF1">
    <property type="entry name" value="FERROCHELATASE, MITOCHONDRIAL"/>
    <property type="match status" value="1"/>
</dbReference>
<dbReference type="Pfam" id="PF00762">
    <property type="entry name" value="Ferrochelatase"/>
    <property type="match status" value="1"/>
</dbReference>
<dbReference type="SUPFAM" id="SSF53800">
    <property type="entry name" value="Chelatase"/>
    <property type="match status" value="1"/>
</dbReference>
<dbReference type="PROSITE" id="PS00534">
    <property type="entry name" value="FERROCHELATASE"/>
    <property type="match status" value="1"/>
</dbReference>
<name>HEMH_BURTA</name>
<protein>
    <recommendedName>
        <fullName evidence="1">Ferrochelatase</fullName>
        <ecNumber evidence="1">4.98.1.1</ecNumber>
    </recommendedName>
    <alternativeName>
        <fullName evidence="1">Heme synthase</fullName>
    </alternativeName>
    <alternativeName>
        <fullName evidence="1">Protoheme ferro-lyase</fullName>
    </alternativeName>
</protein>
<accession>Q2SYZ9</accession>
<reference key="1">
    <citation type="journal article" date="2005" name="BMC Genomics">
        <title>Bacterial genome adaptation to niches: divergence of the potential virulence genes in three Burkholderia species of different survival strategies.</title>
        <authorList>
            <person name="Kim H.S."/>
            <person name="Schell M.A."/>
            <person name="Yu Y."/>
            <person name="Ulrich R.L."/>
            <person name="Sarria S.H."/>
            <person name="Nierman W.C."/>
            <person name="DeShazer D."/>
        </authorList>
    </citation>
    <scope>NUCLEOTIDE SEQUENCE [LARGE SCALE GENOMIC DNA]</scope>
    <source>
        <strain>ATCC 700388 / DSM 13276 / CCUG 48851 / CIP 106301 / E264</strain>
    </source>
</reference>
<organism>
    <name type="scientific">Burkholderia thailandensis (strain ATCC 700388 / DSM 13276 / CCUG 48851 / CIP 106301 / E264)</name>
    <dbReference type="NCBI Taxonomy" id="271848"/>
    <lineage>
        <taxon>Bacteria</taxon>
        <taxon>Pseudomonadati</taxon>
        <taxon>Pseudomonadota</taxon>
        <taxon>Betaproteobacteria</taxon>
        <taxon>Burkholderiales</taxon>
        <taxon>Burkholderiaceae</taxon>
        <taxon>Burkholderia</taxon>
        <taxon>pseudomallei group</taxon>
    </lineage>
</organism>
<proteinExistence type="inferred from homology"/>
<gene>
    <name evidence="1" type="primary">hemH</name>
    <name type="ordered locus">BTH_I1303</name>
</gene>
<sequence>MRFDLEPPSHASAAHRVAVLLVNLGTPDEPTPRAVRRYLAQFLSDPRVVEIPQLVWQVILRTLILPLRGRASAKKYAAVWLPEGSPLRVYTERQVESLKPLFAANGYRVIVDYAMRYGTPSIADVLAQLKRAGAERVLLLPMYPQYSASTTATAFDAAFAALGRMRNQPEVRTVRHYADHPAYIHALAEQVRQYWAAHGRPAFDSGDKLVLSFHGVPKRTLDLGDPYHDQCQQTAALLMSALGLTTFECRVTFQSRFGKAEWLQPYTAPTLKELGAAGVRRADVFCPGFTADCLETIEEIGMEVRDEFLHGGGKEFHRIPCLNASHAWIAALGEIAAENLQGWPVRVATAPEAVT</sequence>
<evidence type="ECO:0000255" key="1">
    <source>
        <dbReference type="HAMAP-Rule" id="MF_00323"/>
    </source>
</evidence>